<reference key="1">
    <citation type="submission" date="2006-08" db="EMBL/GenBank/DDBJ databases">
        <title>Complete sequence of Shewanella frigidimarina NCIMB 400.</title>
        <authorList>
            <consortium name="US DOE Joint Genome Institute"/>
            <person name="Copeland A."/>
            <person name="Lucas S."/>
            <person name="Lapidus A."/>
            <person name="Barry K."/>
            <person name="Detter J.C."/>
            <person name="Glavina del Rio T."/>
            <person name="Hammon N."/>
            <person name="Israni S."/>
            <person name="Dalin E."/>
            <person name="Tice H."/>
            <person name="Pitluck S."/>
            <person name="Fredrickson J.K."/>
            <person name="Kolker E."/>
            <person name="McCuel L.A."/>
            <person name="DiChristina T."/>
            <person name="Nealson K.H."/>
            <person name="Newman D."/>
            <person name="Tiedje J.M."/>
            <person name="Zhou J."/>
            <person name="Romine M.F."/>
            <person name="Culley D.E."/>
            <person name="Serres M."/>
            <person name="Chertkov O."/>
            <person name="Brettin T."/>
            <person name="Bruce D."/>
            <person name="Han C."/>
            <person name="Tapia R."/>
            <person name="Gilna P."/>
            <person name="Schmutz J."/>
            <person name="Larimer F."/>
            <person name="Land M."/>
            <person name="Hauser L."/>
            <person name="Kyrpides N."/>
            <person name="Mikhailova N."/>
            <person name="Richardson P."/>
        </authorList>
    </citation>
    <scope>NUCLEOTIDE SEQUENCE [LARGE SCALE GENOMIC DNA]</scope>
    <source>
        <strain>NCIMB 400</strain>
    </source>
</reference>
<name>NADK_SHEFN</name>
<dbReference type="EC" id="2.7.1.23" evidence="1"/>
<dbReference type="EMBL" id="CP000447">
    <property type="protein sequence ID" value="ABI72632.1"/>
    <property type="molecule type" value="Genomic_DNA"/>
</dbReference>
<dbReference type="SMR" id="Q07ZD2"/>
<dbReference type="STRING" id="318167.Sfri_2792"/>
<dbReference type="KEGG" id="sfr:Sfri_2792"/>
<dbReference type="eggNOG" id="COG0061">
    <property type="taxonomic scope" value="Bacteria"/>
</dbReference>
<dbReference type="HOGENOM" id="CLU_008831_0_1_6"/>
<dbReference type="Proteomes" id="UP000000684">
    <property type="component" value="Chromosome"/>
</dbReference>
<dbReference type="GO" id="GO:0005737">
    <property type="term" value="C:cytoplasm"/>
    <property type="evidence" value="ECO:0007669"/>
    <property type="project" value="UniProtKB-SubCell"/>
</dbReference>
<dbReference type="GO" id="GO:0005524">
    <property type="term" value="F:ATP binding"/>
    <property type="evidence" value="ECO:0007669"/>
    <property type="project" value="UniProtKB-KW"/>
</dbReference>
<dbReference type="GO" id="GO:0046872">
    <property type="term" value="F:metal ion binding"/>
    <property type="evidence" value="ECO:0007669"/>
    <property type="project" value="UniProtKB-UniRule"/>
</dbReference>
<dbReference type="GO" id="GO:0051287">
    <property type="term" value="F:NAD binding"/>
    <property type="evidence" value="ECO:0007669"/>
    <property type="project" value="UniProtKB-ARBA"/>
</dbReference>
<dbReference type="GO" id="GO:0003951">
    <property type="term" value="F:NAD+ kinase activity"/>
    <property type="evidence" value="ECO:0007669"/>
    <property type="project" value="UniProtKB-UniRule"/>
</dbReference>
<dbReference type="GO" id="GO:0019674">
    <property type="term" value="P:NAD metabolic process"/>
    <property type="evidence" value="ECO:0007669"/>
    <property type="project" value="InterPro"/>
</dbReference>
<dbReference type="GO" id="GO:0006741">
    <property type="term" value="P:NADP biosynthetic process"/>
    <property type="evidence" value="ECO:0007669"/>
    <property type="project" value="UniProtKB-UniRule"/>
</dbReference>
<dbReference type="FunFam" id="2.60.200.30:FF:000001">
    <property type="entry name" value="NAD kinase"/>
    <property type="match status" value="1"/>
</dbReference>
<dbReference type="Gene3D" id="3.40.50.10330">
    <property type="entry name" value="Probable inorganic polyphosphate/atp-NAD kinase, domain 1"/>
    <property type="match status" value="1"/>
</dbReference>
<dbReference type="Gene3D" id="2.60.200.30">
    <property type="entry name" value="Probable inorganic polyphosphate/atp-NAD kinase, domain 2"/>
    <property type="match status" value="1"/>
</dbReference>
<dbReference type="HAMAP" id="MF_00361">
    <property type="entry name" value="NAD_kinase"/>
    <property type="match status" value="1"/>
</dbReference>
<dbReference type="InterPro" id="IPR017438">
    <property type="entry name" value="ATP-NAD_kinase_N"/>
</dbReference>
<dbReference type="InterPro" id="IPR017437">
    <property type="entry name" value="ATP-NAD_kinase_PpnK-typ_C"/>
</dbReference>
<dbReference type="InterPro" id="IPR016064">
    <property type="entry name" value="NAD/diacylglycerol_kinase_sf"/>
</dbReference>
<dbReference type="InterPro" id="IPR002504">
    <property type="entry name" value="NADK"/>
</dbReference>
<dbReference type="NCBIfam" id="NF002306">
    <property type="entry name" value="PRK01231.1"/>
    <property type="match status" value="1"/>
</dbReference>
<dbReference type="NCBIfam" id="NF002893">
    <property type="entry name" value="PRK03378.1"/>
    <property type="match status" value="1"/>
</dbReference>
<dbReference type="PANTHER" id="PTHR20275">
    <property type="entry name" value="NAD KINASE"/>
    <property type="match status" value="1"/>
</dbReference>
<dbReference type="PANTHER" id="PTHR20275:SF0">
    <property type="entry name" value="NAD KINASE"/>
    <property type="match status" value="1"/>
</dbReference>
<dbReference type="Pfam" id="PF01513">
    <property type="entry name" value="NAD_kinase"/>
    <property type="match status" value="1"/>
</dbReference>
<dbReference type="Pfam" id="PF20143">
    <property type="entry name" value="NAD_kinase_C"/>
    <property type="match status" value="1"/>
</dbReference>
<dbReference type="SUPFAM" id="SSF111331">
    <property type="entry name" value="NAD kinase/diacylglycerol kinase-like"/>
    <property type="match status" value="1"/>
</dbReference>
<sequence>MGINSYVSRPKGITNSNMTKMFQTIGLIGKPHHQGTNLTLTRLHHWLSMQGFKVIVEGRVSAELGADVCSMDLLEMGEHCDLAIVVGGDGNMLGAARVLARFNVAVIGVNRGNLGFLTDLPPDNFEEALSKVLSGEFETEHRFLLEAEVHRHGKITASNTAVNEAVLHPGKIAHMIQFEVYIDEQFMYSQRADGMIVSTPTGSTAYSLSAGGSILTPNLQALILVPMFPHTLSCRPIVVDACSTIKLVVSPENGENLEVSCDGHVHLAVLPGDEIFIRRSNERLRLIHPKGHNYFHVLRNKLGWGSKLF</sequence>
<feature type="chain" id="PRO_1000079513" description="NAD kinase">
    <location>
        <begin position="1"/>
        <end position="309"/>
    </location>
</feature>
<feature type="active site" description="Proton acceptor" evidence="1">
    <location>
        <position position="89"/>
    </location>
</feature>
<feature type="binding site" evidence="1">
    <location>
        <begin position="89"/>
        <end position="90"/>
    </location>
    <ligand>
        <name>NAD(+)</name>
        <dbReference type="ChEBI" id="CHEBI:57540"/>
    </ligand>
</feature>
<feature type="binding site" evidence="1">
    <location>
        <begin position="163"/>
        <end position="164"/>
    </location>
    <ligand>
        <name>NAD(+)</name>
        <dbReference type="ChEBI" id="CHEBI:57540"/>
    </ligand>
</feature>
<feature type="binding site" evidence="1">
    <location>
        <position position="174"/>
    </location>
    <ligand>
        <name>NAD(+)</name>
        <dbReference type="ChEBI" id="CHEBI:57540"/>
    </ligand>
</feature>
<feature type="binding site" evidence="1">
    <location>
        <position position="191"/>
    </location>
    <ligand>
        <name>NAD(+)</name>
        <dbReference type="ChEBI" id="CHEBI:57540"/>
    </ligand>
</feature>
<feature type="binding site" evidence="1">
    <location>
        <position position="193"/>
    </location>
    <ligand>
        <name>NAD(+)</name>
        <dbReference type="ChEBI" id="CHEBI:57540"/>
    </ligand>
</feature>
<feature type="binding site" evidence="1">
    <location>
        <begin position="204"/>
        <end position="209"/>
    </location>
    <ligand>
        <name>NAD(+)</name>
        <dbReference type="ChEBI" id="CHEBI:57540"/>
    </ligand>
</feature>
<keyword id="KW-0067">ATP-binding</keyword>
<keyword id="KW-0963">Cytoplasm</keyword>
<keyword id="KW-0418">Kinase</keyword>
<keyword id="KW-0520">NAD</keyword>
<keyword id="KW-0521">NADP</keyword>
<keyword id="KW-0547">Nucleotide-binding</keyword>
<keyword id="KW-1185">Reference proteome</keyword>
<keyword id="KW-0808">Transferase</keyword>
<proteinExistence type="inferred from homology"/>
<accession>Q07ZD2</accession>
<gene>
    <name evidence="1" type="primary">nadK</name>
    <name type="ordered locus">Sfri_2792</name>
</gene>
<protein>
    <recommendedName>
        <fullName evidence="1">NAD kinase</fullName>
        <ecNumber evidence="1">2.7.1.23</ecNumber>
    </recommendedName>
    <alternativeName>
        <fullName evidence="1">ATP-dependent NAD kinase</fullName>
    </alternativeName>
</protein>
<evidence type="ECO:0000255" key="1">
    <source>
        <dbReference type="HAMAP-Rule" id="MF_00361"/>
    </source>
</evidence>
<organism>
    <name type="scientific">Shewanella frigidimarina (strain NCIMB 400)</name>
    <dbReference type="NCBI Taxonomy" id="318167"/>
    <lineage>
        <taxon>Bacteria</taxon>
        <taxon>Pseudomonadati</taxon>
        <taxon>Pseudomonadota</taxon>
        <taxon>Gammaproteobacteria</taxon>
        <taxon>Alteromonadales</taxon>
        <taxon>Shewanellaceae</taxon>
        <taxon>Shewanella</taxon>
    </lineage>
</organism>
<comment type="function">
    <text evidence="1">Involved in the regulation of the intracellular balance of NAD and NADP, and is a key enzyme in the biosynthesis of NADP. Catalyzes specifically the phosphorylation on 2'-hydroxyl of the adenosine moiety of NAD to yield NADP.</text>
</comment>
<comment type="catalytic activity">
    <reaction evidence="1">
        <text>NAD(+) + ATP = ADP + NADP(+) + H(+)</text>
        <dbReference type="Rhea" id="RHEA:18629"/>
        <dbReference type="ChEBI" id="CHEBI:15378"/>
        <dbReference type="ChEBI" id="CHEBI:30616"/>
        <dbReference type="ChEBI" id="CHEBI:57540"/>
        <dbReference type="ChEBI" id="CHEBI:58349"/>
        <dbReference type="ChEBI" id="CHEBI:456216"/>
        <dbReference type="EC" id="2.7.1.23"/>
    </reaction>
</comment>
<comment type="cofactor">
    <cofactor evidence="1">
        <name>a divalent metal cation</name>
        <dbReference type="ChEBI" id="CHEBI:60240"/>
    </cofactor>
</comment>
<comment type="subcellular location">
    <subcellularLocation>
        <location evidence="1">Cytoplasm</location>
    </subcellularLocation>
</comment>
<comment type="similarity">
    <text evidence="1">Belongs to the NAD kinase family.</text>
</comment>